<sequence length="177" mass="18811">MSRVGKSPITVPKGAEISINGANVTVKGPLGTLTHNLHPSVGLKQEDGVLTVVLNNDSPEAGAQSGTARALVNNMVVGVTTGFERKLSLVGVGYRAAAQGETLKLQLGFSHDIIYNLPKGVKAETPTQTEIIIKGSNKQQVGQVAAEVRAYRSPEPYKGKGVRYVDEVVHLKETKKK</sequence>
<reference key="1">
    <citation type="journal article" date="2012" name="Stand. Genomic Sci.">
        <title>Complete genome sequence of Polynucleobacter necessarius subsp. asymbioticus type strain (QLW-P1DMWA-1(T)).</title>
        <authorList>
            <person name="Meincke L."/>
            <person name="Copeland A."/>
            <person name="Lapidus A."/>
            <person name="Lucas S."/>
            <person name="Berry K.W."/>
            <person name="Del Rio T.G."/>
            <person name="Hammon N."/>
            <person name="Dalin E."/>
            <person name="Tice H."/>
            <person name="Pitluck S."/>
            <person name="Richardson P."/>
            <person name="Bruce D."/>
            <person name="Goodwin L."/>
            <person name="Han C."/>
            <person name="Tapia R."/>
            <person name="Detter J.C."/>
            <person name="Schmutz J."/>
            <person name="Brettin T."/>
            <person name="Larimer F."/>
            <person name="Land M."/>
            <person name="Hauser L."/>
            <person name="Kyrpides N.C."/>
            <person name="Ivanova N."/>
            <person name="Goker M."/>
            <person name="Woyke T."/>
            <person name="Wu Q.L."/>
            <person name="Pockl M."/>
            <person name="Hahn M.W."/>
            <person name="Klenk H.P."/>
        </authorList>
    </citation>
    <scope>NUCLEOTIDE SEQUENCE [LARGE SCALE GENOMIC DNA]</scope>
    <source>
        <strain>DSM 18221 / CIP 109841 / QLW-P1DMWA-1</strain>
    </source>
</reference>
<dbReference type="EMBL" id="CP000655">
    <property type="protein sequence ID" value="ABP33290.1"/>
    <property type="molecule type" value="Genomic_DNA"/>
</dbReference>
<dbReference type="RefSeq" id="WP_011901915.1">
    <property type="nucleotide sequence ID" value="NC_009379.1"/>
</dbReference>
<dbReference type="SMR" id="A4SUX6"/>
<dbReference type="GeneID" id="31480414"/>
<dbReference type="KEGG" id="pnu:Pnuc_0068"/>
<dbReference type="eggNOG" id="COG0097">
    <property type="taxonomic scope" value="Bacteria"/>
</dbReference>
<dbReference type="HOGENOM" id="CLU_065464_1_2_4"/>
<dbReference type="Proteomes" id="UP000000231">
    <property type="component" value="Chromosome"/>
</dbReference>
<dbReference type="GO" id="GO:0022625">
    <property type="term" value="C:cytosolic large ribosomal subunit"/>
    <property type="evidence" value="ECO:0007669"/>
    <property type="project" value="TreeGrafter"/>
</dbReference>
<dbReference type="GO" id="GO:0019843">
    <property type="term" value="F:rRNA binding"/>
    <property type="evidence" value="ECO:0007669"/>
    <property type="project" value="UniProtKB-UniRule"/>
</dbReference>
<dbReference type="GO" id="GO:0003735">
    <property type="term" value="F:structural constituent of ribosome"/>
    <property type="evidence" value="ECO:0007669"/>
    <property type="project" value="InterPro"/>
</dbReference>
<dbReference type="GO" id="GO:0002181">
    <property type="term" value="P:cytoplasmic translation"/>
    <property type="evidence" value="ECO:0007669"/>
    <property type="project" value="TreeGrafter"/>
</dbReference>
<dbReference type="FunFam" id="3.90.930.12:FF:000001">
    <property type="entry name" value="50S ribosomal protein L6"/>
    <property type="match status" value="1"/>
</dbReference>
<dbReference type="FunFam" id="3.90.930.12:FF:000002">
    <property type="entry name" value="50S ribosomal protein L6"/>
    <property type="match status" value="1"/>
</dbReference>
<dbReference type="Gene3D" id="3.90.930.12">
    <property type="entry name" value="Ribosomal protein L6, alpha-beta domain"/>
    <property type="match status" value="2"/>
</dbReference>
<dbReference type="HAMAP" id="MF_01365_B">
    <property type="entry name" value="Ribosomal_uL6_B"/>
    <property type="match status" value="1"/>
</dbReference>
<dbReference type="InterPro" id="IPR000702">
    <property type="entry name" value="Ribosomal_uL6-like"/>
</dbReference>
<dbReference type="InterPro" id="IPR036789">
    <property type="entry name" value="Ribosomal_uL6-like_a/b-dom_sf"/>
</dbReference>
<dbReference type="InterPro" id="IPR020040">
    <property type="entry name" value="Ribosomal_uL6_a/b-dom"/>
</dbReference>
<dbReference type="InterPro" id="IPR019906">
    <property type="entry name" value="Ribosomal_uL6_bac-type"/>
</dbReference>
<dbReference type="InterPro" id="IPR002358">
    <property type="entry name" value="Ribosomal_uL6_CS"/>
</dbReference>
<dbReference type="NCBIfam" id="TIGR03654">
    <property type="entry name" value="L6_bact"/>
    <property type="match status" value="1"/>
</dbReference>
<dbReference type="PANTHER" id="PTHR11655">
    <property type="entry name" value="60S/50S RIBOSOMAL PROTEIN L6/L9"/>
    <property type="match status" value="1"/>
</dbReference>
<dbReference type="PANTHER" id="PTHR11655:SF14">
    <property type="entry name" value="LARGE RIBOSOMAL SUBUNIT PROTEIN UL6M"/>
    <property type="match status" value="1"/>
</dbReference>
<dbReference type="Pfam" id="PF00347">
    <property type="entry name" value="Ribosomal_L6"/>
    <property type="match status" value="2"/>
</dbReference>
<dbReference type="PIRSF" id="PIRSF002162">
    <property type="entry name" value="Ribosomal_L6"/>
    <property type="match status" value="1"/>
</dbReference>
<dbReference type="PRINTS" id="PR00059">
    <property type="entry name" value="RIBOSOMALL6"/>
</dbReference>
<dbReference type="SUPFAM" id="SSF56053">
    <property type="entry name" value="Ribosomal protein L6"/>
    <property type="match status" value="2"/>
</dbReference>
<dbReference type="PROSITE" id="PS00525">
    <property type="entry name" value="RIBOSOMAL_L6_1"/>
    <property type="match status" value="1"/>
</dbReference>
<keyword id="KW-1185">Reference proteome</keyword>
<keyword id="KW-0687">Ribonucleoprotein</keyword>
<keyword id="KW-0689">Ribosomal protein</keyword>
<keyword id="KW-0694">RNA-binding</keyword>
<keyword id="KW-0699">rRNA-binding</keyword>
<proteinExistence type="inferred from homology"/>
<protein>
    <recommendedName>
        <fullName evidence="1">Large ribosomal subunit protein uL6</fullName>
    </recommendedName>
    <alternativeName>
        <fullName evidence="2">50S ribosomal protein L6</fullName>
    </alternativeName>
</protein>
<comment type="function">
    <text evidence="1">This protein binds to the 23S rRNA, and is important in its secondary structure. It is located near the subunit interface in the base of the L7/L12 stalk, and near the tRNA binding site of the peptidyltransferase center.</text>
</comment>
<comment type="subunit">
    <text evidence="1">Part of the 50S ribosomal subunit.</text>
</comment>
<comment type="similarity">
    <text evidence="1">Belongs to the universal ribosomal protein uL6 family.</text>
</comment>
<accession>A4SUX6</accession>
<gene>
    <name evidence="1" type="primary">rplF</name>
    <name type="ordered locus">Pnuc_0068</name>
</gene>
<feature type="chain" id="PRO_1000087054" description="Large ribosomal subunit protein uL6">
    <location>
        <begin position="1"/>
        <end position="177"/>
    </location>
</feature>
<organism>
    <name type="scientific">Polynucleobacter asymbioticus (strain DSM 18221 / CIP 109841 / QLW-P1DMWA-1)</name>
    <name type="common">Polynucleobacter necessarius subsp. asymbioticus</name>
    <dbReference type="NCBI Taxonomy" id="312153"/>
    <lineage>
        <taxon>Bacteria</taxon>
        <taxon>Pseudomonadati</taxon>
        <taxon>Pseudomonadota</taxon>
        <taxon>Betaproteobacteria</taxon>
        <taxon>Burkholderiales</taxon>
        <taxon>Burkholderiaceae</taxon>
        <taxon>Polynucleobacter</taxon>
    </lineage>
</organism>
<name>RL6_POLAQ</name>
<evidence type="ECO:0000255" key="1">
    <source>
        <dbReference type="HAMAP-Rule" id="MF_01365"/>
    </source>
</evidence>
<evidence type="ECO:0000305" key="2"/>